<protein>
    <recommendedName>
        <fullName evidence="1">Peptidyl-tRNA hydrolase</fullName>
        <shortName evidence="1">Pth</shortName>
        <ecNumber evidence="1">3.1.1.29</ecNumber>
    </recommendedName>
</protein>
<feature type="chain" id="PRO_1000071229" description="Peptidyl-tRNA hydrolase">
    <location>
        <begin position="1"/>
        <end position="185"/>
    </location>
</feature>
<feature type="active site" description="Proton acceptor" evidence="1">
    <location>
        <position position="19"/>
    </location>
</feature>
<feature type="binding site" evidence="1">
    <location>
        <position position="14"/>
    </location>
    <ligand>
        <name>tRNA</name>
        <dbReference type="ChEBI" id="CHEBI:17843"/>
    </ligand>
</feature>
<feature type="binding site" evidence="1">
    <location>
        <position position="64"/>
    </location>
    <ligand>
        <name>tRNA</name>
        <dbReference type="ChEBI" id="CHEBI:17843"/>
    </ligand>
</feature>
<feature type="binding site" evidence="1">
    <location>
        <position position="66"/>
    </location>
    <ligand>
        <name>tRNA</name>
        <dbReference type="ChEBI" id="CHEBI:17843"/>
    </ligand>
</feature>
<feature type="binding site" evidence="1">
    <location>
        <position position="112"/>
    </location>
    <ligand>
        <name>tRNA</name>
        <dbReference type="ChEBI" id="CHEBI:17843"/>
    </ligand>
</feature>
<feature type="site" description="Discriminates between blocked and unblocked aminoacyl-tRNA" evidence="1">
    <location>
        <position position="9"/>
    </location>
</feature>
<feature type="site" description="Stabilizes the basic form of H active site to accept a proton" evidence="1">
    <location>
        <position position="91"/>
    </location>
</feature>
<proteinExistence type="inferred from homology"/>
<sequence length="185" mass="21032">MKIIAGLGNPGQKYDKTKHNTGFMTLDHYLNEKGLSLDKDKFEGHWTKQKINGEDVILLEPQTYMNESGRSVSQIANFFKVAPEDVLIIQDDMDMPIGKIRIRANGKSGGHNGIKSIIRDLGTEKFNRLKIGIRHPKNTTVVSWVLTPFNDEQQKLMDDAFDTSVKIIDDFIAGRDSQYLMNKYN</sequence>
<dbReference type="EC" id="3.1.1.29" evidence="1"/>
<dbReference type="EMBL" id="CP000517">
    <property type="protein sequence ID" value="ABX26517.1"/>
    <property type="molecule type" value="Genomic_DNA"/>
</dbReference>
<dbReference type="RefSeq" id="WP_012211364.1">
    <property type="nucleotide sequence ID" value="NC_010080.1"/>
</dbReference>
<dbReference type="SMR" id="A8YXI6"/>
<dbReference type="KEGG" id="lhe:lhv_0290"/>
<dbReference type="eggNOG" id="COG0193">
    <property type="taxonomic scope" value="Bacteria"/>
</dbReference>
<dbReference type="HOGENOM" id="CLU_062456_4_1_9"/>
<dbReference type="Proteomes" id="UP000000790">
    <property type="component" value="Chromosome"/>
</dbReference>
<dbReference type="GO" id="GO:0005737">
    <property type="term" value="C:cytoplasm"/>
    <property type="evidence" value="ECO:0007669"/>
    <property type="project" value="UniProtKB-SubCell"/>
</dbReference>
<dbReference type="GO" id="GO:0004045">
    <property type="term" value="F:peptidyl-tRNA hydrolase activity"/>
    <property type="evidence" value="ECO:0007669"/>
    <property type="project" value="UniProtKB-UniRule"/>
</dbReference>
<dbReference type="GO" id="GO:0000049">
    <property type="term" value="F:tRNA binding"/>
    <property type="evidence" value="ECO:0007669"/>
    <property type="project" value="UniProtKB-UniRule"/>
</dbReference>
<dbReference type="GO" id="GO:0006515">
    <property type="term" value="P:protein quality control for misfolded or incompletely synthesized proteins"/>
    <property type="evidence" value="ECO:0007669"/>
    <property type="project" value="UniProtKB-UniRule"/>
</dbReference>
<dbReference type="GO" id="GO:0072344">
    <property type="term" value="P:rescue of stalled ribosome"/>
    <property type="evidence" value="ECO:0007669"/>
    <property type="project" value="UniProtKB-UniRule"/>
</dbReference>
<dbReference type="CDD" id="cd00462">
    <property type="entry name" value="PTH"/>
    <property type="match status" value="1"/>
</dbReference>
<dbReference type="FunFam" id="3.40.50.1470:FF:000001">
    <property type="entry name" value="Peptidyl-tRNA hydrolase"/>
    <property type="match status" value="1"/>
</dbReference>
<dbReference type="Gene3D" id="3.40.50.1470">
    <property type="entry name" value="Peptidyl-tRNA hydrolase"/>
    <property type="match status" value="1"/>
</dbReference>
<dbReference type="HAMAP" id="MF_00083">
    <property type="entry name" value="Pept_tRNA_hydro_bact"/>
    <property type="match status" value="1"/>
</dbReference>
<dbReference type="InterPro" id="IPR001328">
    <property type="entry name" value="Pept_tRNA_hydro"/>
</dbReference>
<dbReference type="InterPro" id="IPR018171">
    <property type="entry name" value="Pept_tRNA_hydro_CS"/>
</dbReference>
<dbReference type="InterPro" id="IPR036416">
    <property type="entry name" value="Pept_tRNA_hydro_sf"/>
</dbReference>
<dbReference type="NCBIfam" id="TIGR00447">
    <property type="entry name" value="pth"/>
    <property type="match status" value="1"/>
</dbReference>
<dbReference type="PANTHER" id="PTHR17224">
    <property type="entry name" value="PEPTIDYL-TRNA HYDROLASE"/>
    <property type="match status" value="1"/>
</dbReference>
<dbReference type="PANTHER" id="PTHR17224:SF1">
    <property type="entry name" value="PEPTIDYL-TRNA HYDROLASE"/>
    <property type="match status" value="1"/>
</dbReference>
<dbReference type="Pfam" id="PF01195">
    <property type="entry name" value="Pept_tRNA_hydro"/>
    <property type="match status" value="1"/>
</dbReference>
<dbReference type="SUPFAM" id="SSF53178">
    <property type="entry name" value="Peptidyl-tRNA hydrolase-like"/>
    <property type="match status" value="1"/>
</dbReference>
<dbReference type="PROSITE" id="PS01195">
    <property type="entry name" value="PEPT_TRNA_HYDROL_1"/>
    <property type="match status" value="1"/>
</dbReference>
<reference key="1">
    <citation type="journal article" date="2008" name="J. Bacteriol.">
        <title>Genome sequence of Lactobacillus helveticus: an organism distinguished by selective gene loss and IS element expansion.</title>
        <authorList>
            <person name="Callanan M."/>
            <person name="Kaleta P."/>
            <person name="O'Callaghan J."/>
            <person name="O'Sullivan O."/>
            <person name="Jordan K."/>
            <person name="McAuliffe O."/>
            <person name="Sangrador-Vegas A."/>
            <person name="Slattery L."/>
            <person name="Fitzgerald G.F."/>
            <person name="Beresford T."/>
            <person name="Ross R.P."/>
        </authorList>
    </citation>
    <scope>NUCLEOTIDE SEQUENCE [LARGE SCALE GENOMIC DNA]</scope>
    <source>
        <strain>DPC 4571</strain>
    </source>
</reference>
<organism>
    <name type="scientific">Lactobacillus helveticus (strain DPC 4571)</name>
    <dbReference type="NCBI Taxonomy" id="405566"/>
    <lineage>
        <taxon>Bacteria</taxon>
        <taxon>Bacillati</taxon>
        <taxon>Bacillota</taxon>
        <taxon>Bacilli</taxon>
        <taxon>Lactobacillales</taxon>
        <taxon>Lactobacillaceae</taxon>
        <taxon>Lactobacillus</taxon>
    </lineage>
</organism>
<name>PTH_LACH4</name>
<accession>A8YXI6</accession>
<evidence type="ECO:0000255" key="1">
    <source>
        <dbReference type="HAMAP-Rule" id="MF_00083"/>
    </source>
</evidence>
<gene>
    <name evidence="1" type="primary">pth</name>
    <name type="ordered locus">lhv_0290</name>
</gene>
<comment type="function">
    <text evidence="1">Hydrolyzes ribosome-free peptidyl-tRNAs (with 1 or more amino acids incorporated), which drop off the ribosome during protein synthesis, or as a result of ribosome stalling.</text>
</comment>
<comment type="function">
    <text evidence="1">Catalyzes the release of premature peptidyl moieties from peptidyl-tRNA molecules trapped in stalled 50S ribosomal subunits, and thus maintains levels of free tRNAs and 50S ribosomes.</text>
</comment>
<comment type="catalytic activity">
    <reaction evidence="1">
        <text>an N-acyl-L-alpha-aminoacyl-tRNA + H2O = an N-acyl-L-amino acid + a tRNA + H(+)</text>
        <dbReference type="Rhea" id="RHEA:54448"/>
        <dbReference type="Rhea" id="RHEA-COMP:10123"/>
        <dbReference type="Rhea" id="RHEA-COMP:13883"/>
        <dbReference type="ChEBI" id="CHEBI:15377"/>
        <dbReference type="ChEBI" id="CHEBI:15378"/>
        <dbReference type="ChEBI" id="CHEBI:59874"/>
        <dbReference type="ChEBI" id="CHEBI:78442"/>
        <dbReference type="ChEBI" id="CHEBI:138191"/>
        <dbReference type="EC" id="3.1.1.29"/>
    </reaction>
</comment>
<comment type="subunit">
    <text evidence="1">Monomer.</text>
</comment>
<comment type="subcellular location">
    <subcellularLocation>
        <location evidence="1">Cytoplasm</location>
    </subcellularLocation>
</comment>
<comment type="similarity">
    <text evidence="1">Belongs to the PTH family.</text>
</comment>
<keyword id="KW-0963">Cytoplasm</keyword>
<keyword id="KW-0378">Hydrolase</keyword>
<keyword id="KW-0694">RNA-binding</keyword>
<keyword id="KW-0820">tRNA-binding</keyword>